<gene>
    <name evidence="1" type="primary">queE</name>
    <name type="ordered locus">CC_3159</name>
</gene>
<protein>
    <recommendedName>
        <fullName evidence="1">7-carboxy-7-deazaguanine synthase</fullName>
        <shortName evidence="1">CDG synthase</shortName>
        <ecNumber evidence="1">4.3.99.3</ecNumber>
    </recommendedName>
    <alternativeName>
        <fullName evidence="1">Queuosine biosynthesis protein QueE</fullName>
    </alternativeName>
</protein>
<comment type="function">
    <text evidence="1">Catalyzes the complex heterocyclic radical-mediated conversion of 6-carboxy-5,6,7,8-tetrahydropterin (CPH4) to 7-carboxy-7-deazaguanine (CDG), a step common to the biosynthetic pathways of all 7-deazapurine-containing compounds.</text>
</comment>
<comment type="catalytic activity">
    <reaction evidence="1">
        <text>6-carboxy-5,6,7,8-tetrahydropterin + H(+) = 7-carboxy-7-deazaguanine + NH4(+)</text>
        <dbReference type="Rhea" id="RHEA:27974"/>
        <dbReference type="ChEBI" id="CHEBI:15378"/>
        <dbReference type="ChEBI" id="CHEBI:28938"/>
        <dbReference type="ChEBI" id="CHEBI:61032"/>
        <dbReference type="ChEBI" id="CHEBI:61036"/>
        <dbReference type="EC" id="4.3.99.3"/>
    </reaction>
</comment>
<comment type="cofactor">
    <cofactor evidence="1">
        <name>[4Fe-4S] cluster</name>
        <dbReference type="ChEBI" id="CHEBI:49883"/>
    </cofactor>
    <text evidence="1">Binds 1 [4Fe-4S] cluster. The cluster is coordinated with 3 cysteines and an exchangeable S-adenosyl-L-methionine.</text>
</comment>
<comment type="cofactor">
    <cofactor evidence="1">
        <name>S-adenosyl-L-methionine</name>
        <dbReference type="ChEBI" id="CHEBI:59789"/>
    </cofactor>
    <text evidence="1">Binds 1 S-adenosyl-L-methionine per subunit.</text>
</comment>
<comment type="cofactor">
    <cofactor evidence="1">
        <name>Mg(2+)</name>
        <dbReference type="ChEBI" id="CHEBI:18420"/>
    </cofactor>
</comment>
<comment type="pathway">
    <text evidence="1">Purine metabolism; 7-cyano-7-deazaguanine biosynthesis.</text>
</comment>
<comment type="subunit">
    <text evidence="1">Homodimer.</text>
</comment>
<comment type="similarity">
    <text evidence="1">Belongs to the radical SAM superfamily. 7-carboxy-7-deazaguanine synthase family.</text>
</comment>
<keyword id="KW-0004">4Fe-4S</keyword>
<keyword id="KW-0408">Iron</keyword>
<keyword id="KW-0411">Iron-sulfur</keyword>
<keyword id="KW-0456">Lyase</keyword>
<keyword id="KW-0460">Magnesium</keyword>
<keyword id="KW-0479">Metal-binding</keyword>
<keyword id="KW-0671">Queuosine biosynthesis</keyword>
<keyword id="KW-1185">Reference proteome</keyword>
<keyword id="KW-0949">S-adenosyl-L-methionine</keyword>
<organism>
    <name type="scientific">Caulobacter vibrioides (strain ATCC 19089 / CIP 103742 / CB 15)</name>
    <name type="common">Caulobacter crescentus</name>
    <dbReference type="NCBI Taxonomy" id="190650"/>
    <lineage>
        <taxon>Bacteria</taxon>
        <taxon>Pseudomonadati</taxon>
        <taxon>Pseudomonadota</taxon>
        <taxon>Alphaproteobacteria</taxon>
        <taxon>Caulobacterales</taxon>
        <taxon>Caulobacteraceae</taxon>
        <taxon>Caulobacter</taxon>
    </lineage>
</organism>
<feature type="chain" id="PRO_0000416200" description="7-carboxy-7-deazaguanine synthase">
    <location>
        <begin position="1"/>
        <end position="210"/>
    </location>
</feature>
<feature type="domain" description="Radical SAM core" evidence="2">
    <location>
        <begin position="18"/>
        <end position="210"/>
    </location>
</feature>
<feature type="binding site" evidence="1">
    <location>
        <begin position="12"/>
        <end position="14"/>
    </location>
    <ligand>
        <name>substrate</name>
    </ligand>
</feature>
<feature type="binding site" evidence="1">
    <location>
        <position position="27"/>
    </location>
    <ligand>
        <name>substrate</name>
    </ligand>
</feature>
<feature type="binding site" evidence="1">
    <location>
        <position position="31"/>
    </location>
    <ligand>
        <name>[4Fe-4S] cluster</name>
        <dbReference type="ChEBI" id="CHEBI:49883"/>
        <note>4Fe-4S-S-AdoMet</note>
    </ligand>
</feature>
<feature type="binding site" evidence="1">
    <location>
        <position position="46"/>
    </location>
    <ligand>
        <name>[4Fe-4S] cluster</name>
        <dbReference type="ChEBI" id="CHEBI:49883"/>
        <note>4Fe-4S-S-AdoMet</note>
    </ligand>
</feature>
<feature type="binding site" evidence="1">
    <location>
        <position position="49"/>
    </location>
    <ligand>
        <name>[4Fe-4S] cluster</name>
        <dbReference type="ChEBI" id="CHEBI:49883"/>
        <note>4Fe-4S-S-AdoMet</note>
    </ligand>
</feature>
<feature type="binding site" evidence="1">
    <location>
        <position position="51"/>
    </location>
    <ligand>
        <name>Mg(2+)</name>
        <dbReference type="ChEBI" id="CHEBI:18420"/>
    </ligand>
</feature>
<feature type="binding site" evidence="1">
    <location>
        <position position="90"/>
    </location>
    <ligand>
        <name>substrate</name>
    </ligand>
</feature>
<feature type="binding site" evidence="1">
    <location>
        <position position="92"/>
    </location>
    <ligand>
        <name>S-adenosyl-L-methionine</name>
        <dbReference type="ChEBI" id="CHEBI:59789"/>
    </ligand>
</feature>
<feature type="binding site" evidence="1">
    <location>
        <begin position="133"/>
        <end position="135"/>
    </location>
    <ligand>
        <name>S-adenosyl-L-methionine</name>
        <dbReference type="ChEBI" id="CHEBI:59789"/>
    </ligand>
</feature>
<feature type="binding site" evidence="1">
    <location>
        <begin position="173"/>
        <end position="176"/>
    </location>
    <ligand>
        <name>S-adenosyl-L-methionine</name>
        <dbReference type="ChEBI" id="CHEBI:59789"/>
    </ligand>
</feature>
<feature type="binding site" evidence="1">
    <location>
        <position position="210"/>
    </location>
    <ligand>
        <name>substrate</name>
    </ligand>
</feature>
<name>QUEE_CAUVC</name>
<evidence type="ECO:0000255" key="1">
    <source>
        <dbReference type="HAMAP-Rule" id="MF_00917"/>
    </source>
</evidence>
<evidence type="ECO:0000255" key="2">
    <source>
        <dbReference type="PROSITE-ProRule" id="PRU01266"/>
    </source>
</evidence>
<sequence length="210" mass="22668">MTYSVKEIFLTLQGEGGQAGKAAVFCRFSGCNLWSGREQDRAKAVCTFCDTDFVGTDGENGGKFATAEDLAAAVEAQWTGGPDDRLVVCTGGEPFLQLDDAAIAALHARGFQIAVETNGTITAPAGVDWICVSPKADAPVVQTSGQELKLVFPQEKAMPERFAALDFERFYLQPMDGPDRDANTQLAVAYCLSHPQWRLSVQTHKYLGLP</sequence>
<proteinExistence type="inferred from homology"/>
<reference key="1">
    <citation type="journal article" date="2001" name="Proc. Natl. Acad. Sci. U.S.A.">
        <title>Complete genome sequence of Caulobacter crescentus.</title>
        <authorList>
            <person name="Nierman W.C."/>
            <person name="Feldblyum T.V."/>
            <person name="Laub M.T."/>
            <person name="Paulsen I.T."/>
            <person name="Nelson K.E."/>
            <person name="Eisen J.A."/>
            <person name="Heidelberg J.F."/>
            <person name="Alley M.R.K."/>
            <person name="Ohta N."/>
            <person name="Maddock J.R."/>
            <person name="Potocka I."/>
            <person name="Nelson W.C."/>
            <person name="Newton A."/>
            <person name="Stephens C."/>
            <person name="Phadke N.D."/>
            <person name="Ely B."/>
            <person name="DeBoy R.T."/>
            <person name="Dodson R.J."/>
            <person name="Durkin A.S."/>
            <person name="Gwinn M.L."/>
            <person name="Haft D.H."/>
            <person name="Kolonay J.F."/>
            <person name="Smit J."/>
            <person name="Craven M.B."/>
            <person name="Khouri H.M."/>
            <person name="Shetty J."/>
            <person name="Berry K.J."/>
            <person name="Utterback T.R."/>
            <person name="Tran K."/>
            <person name="Wolf A.M."/>
            <person name="Vamathevan J.J."/>
            <person name="Ermolaeva M.D."/>
            <person name="White O."/>
            <person name="Salzberg S.L."/>
            <person name="Venter J.C."/>
            <person name="Shapiro L."/>
            <person name="Fraser C.M."/>
        </authorList>
    </citation>
    <scope>NUCLEOTIDE SEQUENCE [LARGE SCALE GENOMIC DNA]</scope>
    <source>
        <strain>ATCC 19089 / CIP 103742 / CB 15</strain>
    </source>
</reference>
<accession>Q9A3P3</accession>
<dbReference type="EC" id="4.3.99.3" evidence="1"/>
<dbReference type="EMBL" id="AE005673">
    <property type="protein sequence ID" value="AAK25121.1"/>
    <property type="molecule type" value="Genomic_DNA"/>
</dbReference>
<dbReference type="PIR" id="E87640">
    <property type="entry name" value="E87640"/>
</dbReference>
<dbReference type="RefSeq" id="NP_421953.1">
    <property type="nucleotide sequence ID" value="NC_002696.2"/>
</dbReference>
<dbReference type="RefSeq" id="WP_010920995.1">
    <property type="nucleotide sequence ID" value="NC_002696.2"/>
</dbReference>
<dbReference type="SMR" id="Q9A3P3"/>
<dbReference type="STRING" id="190650.CC_3159"/>
<dbReference type="EnsemblBacteria" id="AAK25121">
    <property type="protein sequence ID" value="AAK25121"/>
    <property type="gene ID" value="CC_3159"/>
</dbReference>
<dbReference type="KEGG" id="ccr:CC_3159"/>
<dbReference type="PATRIC" id="fig|190650.5.peg.3168"/>
<dbReference type="eggNOG" id="COG0602">
    <property type="taxonomic scope" value="Bacteria"/>
</dbReference>
<dbReference type="HOGENOM" id="CLU_066739_0_1_5"/>
<dbReference type="BioCyc" id="CAULO:CC3159-MONOMER"/>
<dbReference type="UniPathway" id="UPA00391"/>
<dbReference type="Proteomes" id="UP000001816">
    <property type="component" value="Chromosome"/>
</dbReference>
<dbReference type="GO" id="GO:0051539">
    <property type="term" value="F:4 iron, 4 sulfur cluster binding"/>
    <property type="evidence" value="ECO:0007669"/>
    <property type="project" value="UniProtKB-UniRule"/>
</dbReference>
<dbReference type="GO" id="GO:0016840">
    <property type="term" value="F:carbon-nitrogen lyase activity"/>
    <property type="evidence" value="ECO:0007669"/>
    <property type="project" value="UniProtKB-UniRule"/>
</dbReference>
<dbReference type="GO" id="GO:0000287">
    <property type="term" value="F:magnesium ion binding"/>
    <property type="evidence" value="ECO:0007669"/>
    <property type="project" value="UniProtKB-UniRule"/>
</dbReference>
<dbReference type="GO" id="GO:1904047">
    <property type="term" value="F:S-adenosyl-L-methionine binding"/>
    <property type="evidence" value="ECO:0007669"/>
    <property type="project" value="UniProtKB-UniRule"/>
</dbReference>
<dbReference type="GO" id="GO:0008616">
    <property type="term" value="P:queuosine biosynthetic process"/>
    <property type="evidence" value="ECO:0007669"/>
    <property type="project" value="UniProtKB-UniRule"/>
</dbReference>
<dbReference type="CDD" id="cd01335">
    <property type="entry name" value="Radical_SAM"/>
    <property type="match status" value="1"/>
</dbReference>
<dbReference type="Gene3D" id="3.20.20.70">
    <property type="entry name" value="Aldolase class I"/>
    <property type="match status" value="1"/>
</dbReference>
<dbReference type="HAMAP" id="MF_00917">
    <property type="entry name" value="QueE"/>
    <property type="match status" value="1"/>
</dbReference>
<dbReference type="InterPro" id="IPR024924">
    <property type="entry name" value="7-CO-7-deazaguanine_synth-like"/>
</dbReference>
<dbReference type="InterPro" id="IPR013785">
    <property type="entry name" value="Aldolase_TIM"/>
</dbReference>
<dbReference type="InterPro" id="IPR030977">
    <property type="entry name" value="QueE_Cx14CxxC"/>
</dbReference>
<dbReference type="InterPro" id="IPR007197">
    <property type="entry name" value="rSAM"/>
</dbReference>
<dbReference type="NCBIfam" id="TIGR04508">
    <property type="entry name" value="queE_Cx14CxxC"/>
    <property type="match status" value="1"/>
</dbReference>
<dbReference type="PANTHER" id="PTHR42836">
    <property type="entry name" value="7-CARBOXY-7-DEAZAGUANINE SYNTHASE"/>
    <property type="match status" value="1"/>
</dbReference>
<dbReference type="PANTHER" id="PTHR42836:SF1">
    <property type="entry name" value="7-CARBOXY-7-DEAZAGUANINE SYNTHASE"/>
    <property type="match status" value="1"/>
</dbReference>
<dbReference type="PIRSF" id="PIRSF000370">
    <property type="entry name" value="QueE"/>
    <property type="match status" value="1"/>
</dbReference>
<dbReference type="SFLD" id="SFLDF00376">
    <property type="entry name" value="7-carboxy-7-deazaguanine_synth"/>
    <property type="match status" value="1"/>
</dbReference>
<dbReference type="SFLD" id="SFLDS00029">
    <property type="entry name" value="Radical_SAM"/>
    <property type="match status" value="1"/>
</dbReference>
<dbReference type="SUPFAM" id="SSF102114">
    <property type="entry name" value="Radical SAM enzymes"/>
    <property type="match status" value="1"/>
</dbReference>
<dbReference type="PROSITE" id="PS51918">
    <property type="entry name" value="RADICAL_SAM"/>
    <property type="match status" value="1"/>
</dbReference>